<dbReference type="EMBL" id="D78189">
    <property type="protein sequence ID" value="BAA11259.1"/>
    <property type="status" value="ALT_INIT"/>
    <property type="molecule type" value="Genomic_DNA"/>
</dbReference>
<dbReference type="EMBL" id="AJ002571">
    <property type="protein sequence ID" value="CAA05585.1"/>
    <property type="molecule type" value="Genomic_DNA"/>
</dbReference>
<dbReference type="EMBL" id="AL009126">
    <property type="protein sequence ID" value="CAB13163.1"/>
    <property type="molecule type" value="Genomic_DNA"/>
</dbReference>
<dbReference type="PIR" id="F69856">
    <property type="entry name" value="F69856"/>
</dbReference>
<dbReference type="RefSeq" id="NP_389189.1">
    <property type="nucleotide sequence ID" value="NC_000964.3"/>
</dbReference>
<dbReference type="RefSeq" id="WP_003244848.1">
    <property type="nucleotide sequence ID" value="NZ_OZ025638.1"/>
</dbReference>
<dbReference type="SMR" id="P49853"/>
<dbReference type="FunCoup" id="P49853">
    <property type="interactions" value="10"/>
</dbReference>
<dbReference type="IntAct" id="P49853">
    <property type="interactions" value="13"/>
</dbReference>
<dbReference type="STRING" id="224308.BSU13060"/>
<dbReference type="PaxDb" id="224308-BSU13060"/>
<dbReference type="EnsemblBacteria" id="CAB13163">
    <property type="protein sequence ID" value="CAB13163"/>
    <property type="gene ID" value="BSU_13060"/>
</dbReference>
<dbReference type="GeneID" id="939857"/>
<dbReference type="KEGG" id="bsu:BSU13060"/>
<dbReference type="PATRIC" id="fig|224308.179.peg.1418"/>
<dbReference type="eggNOG" id="COG2323">
    <property type="taxonomic scope" value="Bacteria"/>
</dbReference>
<dbReference type="InParanoid" id="P49853"/>
<dbReference type="OrthoDB" id="9778331at2"/>
<dbReference type="PhylomeDB" id="P49853"/>
<dbReference type="BioCyc" id="BSUB:BSU13060-MONOMER"/>
<dbReference type="Proteomes" id="UP000001570">
    <property type="component" value="Chromosome"/>
</dbReference>
<dbReference type="GO" id="GO:0005886">
    <property type="term" value="C:plasma membrane"/>
    <property type="evidence" value="ECO:0007669"/>
    <property type="project" value="UniProtKB-SubCell"/>
</dbReference>
<dbReference type="Gene3D" id="3.30.240.20">
    <property type="entry name" value="bsu07140 like domains"/>
    <property type="match status" value="2"/>
</dbReference>
<dbReference type="InterPro" id="IPR007353">
    <property type="entry name" value="DUF421"/>
</dbReference>
<dbReference type="InterPro" id="IPR023090">
    <property type="entry name" value="UPF0702_alpha/beta_dom_sf"/>
</dbReference>
<dbReference type="InterPro" id="IPR048454">
    <property type="entry name" value="YetF_N"/>
</dbReference>
<dbReference type="PANTHER" id="PTHR34582">
    <property type="entry name" value="UPF0702 TRANSMEMBRANE PROTEIN YCAP"/>
    <property type="match status" value="1"/>
</dbReference>
<dbReference type="PANTHER" id="PTHR34582:SF6">
    <property type="entry name" value="UPF0702 TRANSMEMBRANE PROTEIN YCAP"/>
    <property type="match status" value="1"/>
</dbReference>
<dbReference type="Pfam" id="PF04239">
    <property type="entry name" value="DUF421"/>
    <property type="match status" value="1"/>
</dbReference>
<dbReference type="Pfam" id="PF20730">
    <property type="entry name" value="YetF_N"/>
    <property type="match status" value="1"/>
</dbReference>
<name>YKJA_BACSU</name>
<evidence type="ECO:0000255" key="1"/>
<evidence type="ECO:0000269" key="2">
    <source>
    </source>
</evidence>
<evidence type="ECO:0000305" key="3"/>
<gene>
    <name type="primary">ykjA</name>
    <name type="ordered locus">BSU13060</name>
</gene>
<reference key="1">
    <citation type="journal article" date="1996" name="J. Bacteriol.">
        <title>Oxygen-controlled regulation of the flavohemoglobin gene in Bacillus subtilis.</title>
        <authorList>
            <person name="Lacelle M."/>
            <person name="Kumano M."/>
            <person name="Kurita K."/>
            <person name="Yamane K."/>
            <person name="Zuber P."/>
            <person name="Nakano M.M."/>
        </authorList>
    </citation>
    <scope>NUCLEOTIDE SEQUENCE [GENOMIC DNA]</scope>
    <source>
        <strain>168</strain>
    </source>
</reference>
<reference key="2">
    <citation type="submission" date="1997-11" db="EMBL/GenBank/DDBJ databases">
        <title>Sequence of the Bacillus subtilis genome between xlyA and ykoR.</title>
        <authorList>
            <person name="Devine K.M."/>
        </authorList>
    </citation>
    <scope>NUCLEOTIDE SEQUENCE [GENOMIC DNA]</scope>
    <source>
        <strain>168</strain>
    </source>
</reference>
<reference key="3">
    <citation type="journal article" date="1997" name="Nature">
        <title>The complete genome sequence of the Gram-positive bacterium Bacillus subtilis.</title>
        <authorList>
            <person name="Kunst F."/>
            <person name="Ogasawara N."/>
            <person name="Moszer I."/>
            <person name="Albertini A.M."/>
            <person name="Alloni G."/>
            <person name="Azevedo V."/>
            <person name="Bertero M.G."/>
            <person name="Bessieres P."/>
            <person name="Bolotin A."/>
            <person name="Borchert S."/>
            <person name="Borriss R."/>
            <person name="Boursier L."/>
            <person name="Brans A."/>
            <person name="Braun M."/>
            <person name="Brignell S.C."/>
            <person name="Bron S."/>
            <person name="Brouillet S."/>
            <person name="Bruschi C.V."/>
            <person name="Caldwell B."/>
            <person name="Capuano V."/>
            <person name="Carter N.M."/>
            <person name="Choi S.-K."/>
            <person name="Codani J.-J."/>
            <person name="Connerton I.F."/>
            <person name="Cummings N.J."/>
            <person name="Daniel R.A."/>
            <person name="Denizot F."/>
            <person name="Devine K.M."/>
            <person name="Duesterhoeft A."/>
            <person name="Ehrlich S.D."/>
            <person name="Emmerson P.T."/>
            <person name="Entian K.-D."/>
            <person name="Errington J."/>
            <person name="Fabret C."/>
            <person name="Ferrari E."/>
            <person name="Foulger D."/>
            <person name="Fritz C."/>
            <person name="Fujita M."/>
            <person name="Fujita Y."/>
            <person name="Fuma S."/>
            <person name="Galizzi A."/>
            <person name="Galleron N."/>
            <person name="Ghim S.-Y."/>
            <person name="Glaser P."/>
            <person name="Goffeau A."/>
            <person name="Golightly E.J."/>
            <person name="Grandi G."/>
            <person name="Guiseppi G."/>
            <person name="Guy B.J."/>
            <person name="Haga K."/>
            <person name="Haiech J."/>
            <person name="Harwood C.R."/>
            <person name="Henaut A."/>
            <person name="Hilbert H."/>
            <person name="Holsappel S."/>
            <person name="Hosono S."/>
            <person name="Hullo M.-F."/>
            <person name="Itaya M."/>
            <person name="Jones L.-M."/>
            <person name="Joris B."/>
            <person name="Karamata D."/>
            <person name="Kasahara Y."/>
            <person name="Klaerr-Blanchard M."/>
            <person name="Klein C."/>
            <person name="Kobayashi Y."/>
            <person name="Koetter P."/>
            <person name="Koningstein G."/>
            <person name="Krogh S."/>
            <person name="Kumano M."/>
            <person name="Kurita K."/>
            <person name="Lapidus A."/>
            <person name="Lardinois S."/>
            <person name="Lauber J."/>
            <person name="Lazarevic V."/>
            <person name="Lee S.-M."/>
            <person name="Levine A."/>
            <person name="Liu H."/>
            <person name="Masuda S."/>
            <person name="Mauel C."/>
            <person name="Medigue C."/>
            <person name="Medina N."/>
            <person name="Mellado R.P."/>
            <person name="Mizuno M."/>
            <person name="Moestl D."/>
            <person name="Nakai S."/>
            <person name="Noback M."/>
            <person name="Noone D."/>
            <person name="O'Reilly M."/>
            <person name="Ogawa K."/>
            <person name="Ogiwara A."/>
            <person name="Oudega B."/>
            <person name="Park S.-H."/>
            <person name="Parro V."/>
            <person name="Pohl T.M."/>
            <person name="Portetelle D."/>
            <person name="Porwollik S."/>
            <person name="Prescott A.M."/>
            <person name="Presecan E."/>
            <person name="Pujic P."/>
            <person name="Purnelle B."/>
            <person name="Rapoport G."/>
            <person name="Rey M."/>
            <person name="Reynolds S."/>
            <person name="Rieger M."/>
            <person name="Rivolta C."/>
            <person name="Rocha E."/>
            <person name="Roche B."/>
            <person name="Rose M."/>
            <person name="Sadaie Y."/>
            <person name="Sato T."/>
            <person name="Scanlan E."/>
            <person name="Schleich S."/>
            <person name="Schroeter R."/>
            <person name="Scoffone F."/>
            <person name="Sekiguchi J."/>
            <person name="Sekowska A."/>
            <person name="Seror S.J."/>
            <person name="Serror P."/>
            <person name="Shin B.-S."/>
            <person name="Soldo B."/>
            <person name="Sorokin A."/>
            <person name="Tacconi E."/>
            <person name="Takagi T."/>
            <person name="Takahashi H."/>
            <person name="Takemaru K."/>
            <person name="Takeuchi M."/>
            <person name="Tamakoshi A."/>
            <person name="Tanaka T."/>
            <person name="Terpstra P."/>
            <person name="Tognoni A."/>
            <person name="Tosato V."/>
            <person name="Uchiyama S."/>
            <person name="Vandenbol M."/>
            <person name="Vannier F."/>
            <person name="Vassarotti A."/>
            <person name="Viari A."/>
            <person name="Wambutt R."/>
            <person name="Wedler E."/>
            <person name="Wedler H."/>
            <person name="Weitzenegger T."/>
            <person name="Winters P."/>
            <person name="Wipat A."/>
            <person name="Yamamoto H."/>
            <person name="Yamane K."/>
            <person name="Yasumoto K."/>
            <person name="Yata K."/>
            <person name="Yoshida K."/>
            <person name="Yoshikawa H.-F."/>
            <person name="Zumstein E."/>
            <person name="Yoshikawa H."/>
            <person name="Danchin A."/>
        </authorList>
    </citation>
    <scope>NUCLEOTIDE SEQUENCE [LARGE SCALE GENOMIC DNA]</scope>
    <source>
        <strain>168</strain>
    </source>
</reference>
<reference key="4">
    <citation type="journal article" date="2002" name="Proc. Natl. Acad. Sci. U.S.A.">
        <title>An expanded view of bacterial DNA replication.</title>
        <authorList>
            <person name="Noirot-Gros M.-F."/>
            <person name="Dervyn E."/>
            <person name="Wu L.J."/>
            <person name="Mervelet P."/>
            <person name="Errington J."/>
            <person name="Ehrlich S.D."/>
            <person name="Noirot P."/>
        </authorList>
    </citation>
    <scope>DISRUPTION PHENOTYPE</scope>
    <source>
        <strain>168</strain>
    </source>
</reference>
<proteinExistence type="inferred from homology"/>
<keyword id="KW-1003">Cell membrane</keyword>
<keyword id="KW-0472">Membrane</keyword>
<keyword id="KW-1185">Reference proteome</keyword>
<keyword id="KW-0812">Transmembrane</keyword>
<keyword id="KW-1133">Transmembrane helix</keyword>
<comment type="subcellular location">
    <subcellularLocation>
        <location evidence="3">Cell membrane</location>
        <topology evidence="1">Multi-pass membrane protein</topology>
    </subcellularLocation>
</comment>
<comment type="disruption phenotype">
    <text evidence="2">Non-essential, it can be disrupted (PubMed:12060778).</text>
</comment>
<comment type="similarity">
    <text evidence="3">Belongs to the UPF0702 family.</text>
</comment>
<comment type="sequence caution" evidence="3">
    <conflict type="erroneous initiation">
        <sequence resource="EMBL-CDS" id="BAA11259"/>
    </conflict>
    <text>Truncated N-terminus.</text>
</comment>
<organism>
    <name type="scientific">Bacillus subtilis (strain 168)</name>
    <dbReference type="NCBI Taxonomy" id="224308"/>
    <lineage>
        <taxon>Bacteria</taxon>
        <taxon>Bacillati</taxon>
        <taxon>Bacillota</taxon>
        <taxon>Bacilli</taxon>
        <taxon>Bacillales</taxon>
        <taxon>Bacillaceae</taxon>
        <taxon>Bacillus</taxon>
    </lineage>
</organism>
<protein>
    <recommendedName>
        <fullName>UPF0702 transmembrane protein YkjA</fullName>
    </recommendedName>
    <alternativeName>
        <fullName>ORF3</fullName>
    </alternativeName>
</protein>
<accession>P49853</accession>
<sequence length="243" mass="27707">MLWMVWVFLLKPVIVFSIAYILFRLAGKKAVSQMNNFDLLLTFAIGTIISEPILTSKLPMSIYYAGAFLVLYLIMSKLSLSNKWRWLLVVSPTVLIRNGDIDERGLRKERLTVNELLGKLREKGYADPADIDLAIIEETGEVSVIPKEEARAVQVRDLNMEAERNFIPIPLILDGEILDHNLKYLQKNRSWLFEKLEEKGYSPKLLSSIILGTMNARGDISLDLNTANEPQHDPYLYKPGNNN</sequence>
<feature type="chain" id="PRO_0000049602" description="UPF0702 transmembrane protein YkjA">
    <location>
        <begin position="1"/>
        <end position="243"/>
    </location>
</feature>
<feature type="transmembrane region" description="Helical" evidence="1">
    <location>
        <begin position="3"/>
        <end position="23"/>
    </location>
</feature>
<feature type="transmembrane region" description="Helical" evidence="1">
    <location>
        <begin position="34"/>
        <end position="54"/>
    </location>
</feature>
<feature type="transmembrane region" description="Helical" evidence="1">
    <location>
        <begin position="58"/>
        <end position="78"/>
    </location>
</feature>